<dbReference type="EC" id="6.3.3.3" evidence="1"/>
<dbReference type="EMBL" id="CP000803">
    <property type="protein sequence ID" value="ABU61823.1"/>
    <property type="molecule type" value="Genomic_DNA"/>
</dbReference>
<dbReference type="RefSeq" id="WP_003016414.1">
    <property type="nucleotide sequence ID" value="NC_009749.1"/>
</dbReference>
<dbReference type="SMR" id="A7NCX0"/>
<dbReference type="KEGG" id="fta:FTA_1348"/>
<dbReference type="HOGENOM" id="CLU_072551_0_0_6"/>
<dbReference type="UniPathway" id="UPA00078">
    <property type="reaction ID" value="UER00161"/>
</dbReference>
<dbReference type="GO" id="GO:0005829">
    <property type="term" value="C:cytosol"/>
    <property type="evidence" value="ECO:0007669"/>
    <property type="project" value="TreeGrafter"/>
</dbReference>
<dbReference type="GO" id="GO:0005524">
    <property type="term" value="F:ATP binding"/>
    <property type="evidence" value="ECO:0007669"/>
    <property type="project" value="UniProtKB-UniRule"/>
</dbReference>
<dbReference type="GO" id="GO:0004141">
    <property type="term" value="F:dethiobiotin synthase activity"/>
    <property type="evidence" value="ECO:0007669"/>
    <property type="project" value="UniProtKB-UniRule"/>
</dbReference>
<dbReference type="GO" id="GO:0000287">
    <property type="term" value="F:magnesium ion binding"/>
    <property type="evidence" value="ECO:0007669"/>
    <property type="project" value="UniProtKB-UniRule"/>
</dbReference>
<dbReference type="GO" id="GO:0009102">
    <property type="term" value="P:biotin biosynthetic process"/>
    <property type="evidence" value="ECO:0007669"/>
    <property type="project" value="UniProtKB-UniRule"/>
</dbReference>
<dbReference type="CDD" id="cd03109">
    <property type="entry name" value="DTBS"/>
    <property type="match status" value="1"/>
</dbReference>
<dbReference type="Gene3D" id="3.40.50.300">
    <property type="entry name" value="P-loop containing nucleotide triphosphate hydrolases"/>
    <property type="match status" value="1"/>
</dbReference>
<dbReference type="HAMAP" id="MF_00336">
    <property type="entry name" value="BioD"/>
    <property type="match status" value="1"/>
</dbReference>
<dbReference type="InterPro" id="IPR004472">
    <property type="entry name" value="DTB_synth_BioD"/>
</dbReference>
<dbReference type="InterPro" id="IPR027417">
    <property type="entry name" value="P-loop_NTPase"/>
</dbReference>
<dbReference type="NCBIfam" id="TIGR00347">
    <property type="entry name" value="bioD"/>
    <property type="match status" value="1"/>
</dbReference>
<dbReference type="PANTHER" id="PTHR43210">
    <property type="entry name" value="DETHIOBIOTIN SYNTHETASE"/>
    <property type="match status" value="1"/>
</dbReference>
<dbReference type="PANTHER" id="PTHR43210:SF5">
    <property type="entry name" value="DETHIOBIOTIN SYNTHETASE"/>
    <property type="match status" value="1"/>
</dbReference>
<dbReference type="Pfam" id="PF13500">
    <property type="entry name" value="AAA_26"/>
    <property type="match status" value="1"/>
</dbReference>
<dbReference type="PIRSF" id="PIRSF006755">
    <property type="entry name" value="DTB_synth"/>
    <property type="match status" value="1"/>
</dbReference>
<dbReference type="SUPFAM" id="SSF52540">
    <property type="entry name" value="P-loop containing nucleoside triphosphate hydrolases"/>
    <property type="match status" value="1"/>
</dbReference>
<proteinExistence type="inferred from homology"/>
<sequence length="219" mass="24502">MKKFFIIGTNTEVGKTYISTKLIEVCEHQNIKSLCLKPVASGQSQFSELCEDVESILNAYKHKFTAAEINLISFNQAVAPHIIAAKTKVDISIENLKQFIEDKYNQDLDILFIEGAGGLLTPYSDHTTQLDLIKALQIPVLLVSAIKVGCINHTLLTINELNRHNIKLAGWIANCNDSNIKYIDEQINTIEELSGYKCSAKISRNADYLDFIDLSKILI</sequence>
<name>BIOD_FRATF</name>
<keyword id="KW-0067">ATP-binding</keyword>
<keyword id="KW-0093">Biotin biosynthesis</keyword>
<keyword id="KW-0963">Cytoplasm</keyword>
<keyword id="KW-0436">Ligase</keyword>
<keyword id="KW-0460">Magnesium</keyword>
<keyword id="KW-0479">Metal-binding</keyword>
<keyword id="KW-0547">Nucleotide-binding</keyword>
<gene>
    <name evidence="1" type="primary">bioD</name>
    <name type="ordered locus">FTA_1348</name>
</gene>
<organism>
    <name type="scientific">Francisella tularensis subsp. holarctica (strain FTNF002-00 / FTA)</name>
    <dbReference type="NCBI Taxonomy" id="458234"/>
    <lineage>
        <taxon>Bacteria</taxon>
        <taxon>Pseudomonadati</taxon>
        <taxon>Pseudomonadota</taxon>
        <taxon>Gammaproteobacteria</taxon>
        <taxon>Thiotrichales</taxon>
        <taxon>Francisellaceae</taxon>
        <taxon>Francisella</taxon>
    </lineage>
</organism>
<comment type="function">
    <text evidence="1">Catalyzes a mechanistically unusual reaction, the ATP-dependent insertion of CO2 between the N7 and N8 nitrogen atoms of 7,8-diaminopelargonic acid (DAPA, also called 7,8-diammoniononanoate) to form a ureido ring.</text>
</comment>
<comment type="catalytic activity">
    <reaction evidence="1">
        <text>(7R,8S)-7,8-diammoniononanoate + CO2 + ATP = (4R,5S)-dethiobiotin + ADP + phosphate + 3 H(+)</text>
        <dbReference type="Rhea" id="RHEA:15805"/>
        <dbReference type="ChEBI" id="CHEBI:15378"/>
        <dbReference type="ChEBI" id="CHEBI:16526"/>
        <dbReference type="ChEBI" id="CHEBI:30616"/>
        <dbReference type="ChEBI" id="CHEBI:43474"/>
        <dbReference type="ChEBI" id="CHEBI:149469"/>
        <dbReference type="ChEBI" id="CHEBI:149473"/>
        <dbReference type="ChEBI" id="CHEBI:456216"/>
        <dbReference type="EC" id="6.3.3.3"/>
    </reaction>
</comment>
<comment type="cofactor">
    <cofactor evidence="1">
        <name>Mg(2+)</name>
        <dbReference type="ChEBI" id="CHEBI:18420"/>
    </cofactor>
</comment>
<comment type="pathway">
    <text evidence="1">Cofactor biosynthesis; biotin biosynthesis; biotin from 7,8-diaminononanoate: step 1/2.</text>
</comment>
<comment type="subunit">
    <text evidence="1">Homodimer.</text>
</comment>
<comment type="subcellular location">
    <subcellularLocation>
        <location evidence="1">Cytoplasm</location>
    </subcellularLocation>
</comment>
<comment type="similarity">
    <text evidence="1">Belongs to the dethiobiotin synthetase family.</text>
</comment>
<accession>A7NCX0</accession>
<evidence type="ECO:0000255" key="1">
    <source>
        <dbReference type="HAMAP-Rule" id="MF_00336"/>
    </source>
</evidence>
<protein>
    <recommendedName>
        <fullName evidence="1">ATP-dependent dethiobiotin synthetase BioD</fullName>
        <ecNumber evidence="1">6.3.3.3</ecNumber>
    </recommendedName>
    <alternativeName>
        <fullName evidence="1">DTB synthetase</fullName>
        <shortName evidence="1">DTBS</shortName>
    </alternativeName>
    <alternativeName>
        <fullName evidence="1">Dethiobiotin synthase</fullName>
    </alternativeName>
</protein>
<reference key="1">
    <citation type="journal article" date="2009" name="PLoS ONE">
        <title>Complete genome sequence of Francisella tularensis subspecies holarctica FTNF002-00.</title>
        <authorList>
            <person name="Barabote R.D."/>
            <person name="Xie G."/>
            <person name="Brettin T.S."/>
            <person name="Hinrichs S.H."/>
            <person name="Fey P.D."/>
            <person name="Jay J.J."/>
            <person name="Engle J.L."/>
            <person name="Godbole S.D."/>
            <person name="Noronha J.M."/>
            <person name="Scheuermann R.H."/>
            <person name="Zhou L.W."/>
            <person name="Lion C."/>
            <person name="Dempsey M.P."/>
        </authorList>
    </citation>
    <scope>NUCLEOTIDE SEQUENCE [LARGE SCALE GENOMIC DNA]</scope>
    <source>
        <strain>FTNF002-00 / FTA</strain>
    </source>
</reference>
<feature type="chain" id="PRO_1000019559" description="ATP-dependent dethiobiotin synthetase BioD">
    <location>
        <begin position="1"/>
        <end position="219"/>
    </location>
</feature>
<feature type="active site" evidence="1">
    <location>
        <position position="37"/>
    </location>
</feature>
<feature type="binding site" evidence="1">
    <location>
        <begin position="12"/>
        <end position="17"/>
    </location>
    <ligand>
        <name>ATP</name>
        <dbReference type="ChEBI" id="CHEBI:30616"/>
    </ligand>
</feature>
<feature type="binding site" evidence="1">
    <location>
        <position position="16"/>
    </location>
    <ligand>
        <name>Mg(2+)</name>
        <dbReference type="ChEBI" id="CHEBI:18420"/>
    </ligand>
</feature>
<feature type="binding site" evidence="1">
    <location>
        <position position="41"/>
    </location>
    <ligand>
        <name>substrate</name>
    </ligand>
</feature>
<feature type="binding site" evidence="1">
    <location>
        <position position="52"/>
    </location>
    <ligand>
        <name>ATP</name>
        <dbReference type="ChEBI" id="CHEBI:30616"/>
    </ligand>
</feature>
<feature type="binding site" evidence="1">
    <location>
        <position position="52"/>
    </location>
    <ligand>
        <name>Mg(2+)</name>
        <dbReference type="ChEBI" id="CHEBI:18420"/>
    </ligand>
</feature>
<feature type="binding site" evidence="1">
    <location>
        <begin position="114"/>
        <end position="117"/>
    </location>
    <ligand>
        <name>ATP</name>
        <dbReference type="ChEBI" id="CHEBI:30616"/>
    </ligand>
</feature>
<feature type="binding site" evidence="1">
    <location>
        <position position="114"/>
    </location>
    <ligand>
        <name>Mg(2+)</name>
        <dbReference type="ChEBI" id="CHEBI:18420"/>
    </ligand>
</feature>
<feature type="binding site" evidence="1">
    <location>
        <begin position="174"/>
        <end position="175"/>
    </location>
    <ligand>
        <name>ATP</name>
        <dbReference type="ChEBI" id="CHEBI:30616"/>
    </ligand>
</feature>